<gene>
    <name evidence="1" type="primary">carA</name>
    <name type="ordered locus">MK0491</name>
</gene>
<protein>
    <recommendedName>
        <fullName evidence="1">Carbamoyl phosphate synthase small chain</fullName>
        <ecNumber evidence="1">6.3.5.5</ecNumber>
    </recommendedName>
    <alternativeName>
        <fullName evidence="1">Carbamoyl phosphate synthetase glutamine chain</fullName>
    </alternativeName>
</protein>
<proteinExistence type="inferred from homology"/>
<sequence>MRAALALEDGTIVHGELFGSPREAEGEVVFNTSHTGFQEALTDPSYRGQILIMTFPMQGNYGILPEVGESDRVQVEGFVVRYLHDGPIHPRAEITLDEFLQDHGVPGIAGVDTRMLTRKIRTEGAMRGVLVPYEPDDQPSDEELLERVREVPHISEMDLVPQVSVREEYRFSDGKPEIVVIDCGVKRSILRELAKRGAGVTVVPYDTSAQEIMDIDPDGVVVSNGPGDPKRVRETVETVRELIGQVPLMGICLGNQILGLAEGGDTFKLKFGHRGANQPVKDLDKDRVYITSQNHGFALDPDSLRDTPLRVRWVNVNDGTVEGVVHTDAPAFSVQFHPEAGPGPWDTKWVFDEFLAMCREH</sequence>
<comment type="function">
    <text evidence="1">Small subunit of the glutamine-dependent carbamoyl phosphate synthetase (CPSase). CPSase catalyzes the formation of carbamoyl phosphate from the ammonia moiety of glutamine, carbonate, and phosphate donated by ATP, constituting the first step of 2 biosynthetic pathways, one leading to arginine and/or urea and the other to pyrimidine nucleotides. The small subunit (glutamine amidotransferase) binds and cleaves glutamine to supply the large subunit with the substrate ammonia.</text>
</comment>
<comment type="catalytic activity">
    <reaction evidence="1">
        <text>hydrogencarbonate + L-glutamine + 2 ATP + H2O = carbamoyl phosphate + L-glutamate + 2 ADP + phosphate + 2 H(+)</text>
        <dbReference type="Rhea" id="RHEA:18633"/>
        <dbReference type="ChEBI" id="CHEBI:15377"/>
        <dbReference type="ChEBI" id="CHEBI:15378"/>
        <dbReference type="ChEBI" id="CHEBI:17544"/>
        <dbReference type="ChEBI" id="CHEBI:29985"/>
        <dbReference type="ChEBI" id="CHEBI:30616"/>
        <dbReference type="ChEBI" id="CHEBI:43474"/>
        <dbReference type="ChEBI" id="CHEBI:58228"/>
        <dbReference type="ChEBI" id="CHEBI:58359"/>
        <dbReference type="ChEBI" id="CHEBI:456216"/>
        <dbReference type="EC" id="6.3.5.5"/>
    </reaction>
</comment>
<comment type="catalytic activity">
    <molecule>Carbamoyl phosphate synthase small chain</molecule>
    <reaction evidence="1">
        <text>L-glutamine + H2O = L-glutamate + NH4(+)</text>
        <dbReference type="Rhea" id="RHEA:15889"/>
        <dbReference type="ChEBI" id="CHEBI:15377"/>
        <dbReference type="ChEBI" id="CHEBI:28938"/>
        <dbReference type="ChEBI" id="CHEBI:29985"/>
        <dbReference type="ChEBI" id="CHEBI:58359"/>
    </reaction>
</comment>
<comment type="pathway">
    <text evidence="1">Amino-acid biosynthesis; L-arginine biosynthesis; carbamoyl phosphate from bicarbonate: step 1/1.</text>
</comment>
<comment type="pathway">
    <text evidence="1">Pyrimidine metabolism; UMP biosynthesis via de novo pathway; (S)-dihydroorotate from bicarbonate: step 1/3.</text>
</comment>
<comment type="subunit">
    <text evidence="1">Composed of two chains; the small (or glutamine) chain promotes the hydrolysis of glutamine to ammonia, which is used by the large (or ammonia) chain to synthesize carbamoyl phosphate. Tetramer of heterodimers (alpha,beta)4.</text>
</comment>
<comment type="similarity">
    <text evidence="1">Belongs to the CarA family.</text>
</comment>
<feature type="chain" id="PRO_0000112359" description="Carbamoyl phosphate synthase small chain">
    <location>
        <begin position="1"/>
        <end position="361"/>
    </location>
</feature>
<feature type="domain" description="Glutamine amidotransferase type-1" evidence="1">
    <location>
        <begin position="177"/>
        <end position="361"/>
    </location>
</feature>
<feature type="region of interest" description="CPSase" evidence="1">
    <location>
        <begin position="1"/>
        <end position="173"/>
    </location>
</feature>
<feature type="active site" description="Nucleophile" evidence="1">
    <location>
        <position position="252"/>
    </location>
</feature>
<feature type="active site" evidence="1">
    <location>
        <position position="337"/>
    </location>
</feature>
<feature type="active site" evidence="1">
    <location>
        <position position="339"/>
    </location>
</feature>
<feature type="binding site" evidence="1">
    <location>
        <position position="45"/>
    </location>
    <ligand>
        <name>L-glutamine</name>
        <dbReference type="ChEBI" id="CHEBI:58359"/>
    </ligand>
</feature>
<feature type="binding site" evidence="1">
    <location>
        <position position="225"/>
    </location>
    <ligand>
        <name>L-glutamine</name>
        <dbReference type="ChEBI" id="CHEBI:58359"/>
    </ligand>
</feature>
<feature type="binding site" evidence="1">
    <location>
        <position position="227"/>
    </location>
    <ligand>
        <name>L-glutamine</name>
        <dbReference type="ChEBI" id="CHEBI:58359"/>
    </ligand>
</feature>
<feature type="binding site" evidence="1">
    <location>
        <position position="253"/>
    </location>
    <ligand>
        <name>L-glutamine</name>
        <dbReference type="ChEBI" id="CHEBI:58359"/>
    </ligand>
</feature>
<feature type="binding site" evidence="1">
    <location>
        <position position="256"/>
    </location>
    <ligand>
        <name>L-glutamine</name>
        <dbReference type="ChEBI" id="CHEBI:58359"/>
    </ligand>
</feature>
<feature type="binding site" evidence="1">
    <location>
        <position position="294"/>
    </location>
    <ligand>
        <name>L-glutamine</name>
        <dbReference type="ChEBI" id="CHEBI:58359"/>
    </ligand>
</feature>
<feature type="binding site" evidence="1">
    <location>
        <position position="296"/>
    </location>
    <ligand>
        <name>L-glutamine</name>
        <dbReference type="ChEBI" id="CHEBI:58359"/>
    </ligand>
</feature>
<feature type="binding site" evidence="1">
    <location>
        <position position="297"/>
    </location>
    <ligand>
        <name>L-glutamine</name>
        <dbReference type="ChEBI" id="CHEBI:58359"/>
    </ligand>
</feature>
<name>CARA_METKA</name>
<reference key="1">
    <citation type="journal article" date="2002" name="Proc. Natl. Acad. Sci. U.S.A.">
        <title>The complete genome of hyperthermophile Methanopyrus kandleri AV19 and monophyly of archaeal methanogens.</title>
        <authorList>
            <person name="Slesarev A.I."/>
            <person name="Mezhevaya K.V."/>
            <person name="Makarova K.S."/>
            <person name="Polushin N.N."/>
            <person name="Shcherbinina O.V."/>
            <person name="Shakhova V.V."/>
            <person name="Belova G.I."/>
            <person name="Aravind L."/>
            <person name="Natale D.A."/>
            <person name="Rogozin I.B."/>
            <person name="Tatusov R.L."/>
            <person name="Wolf Y.I."/>
            <person name="Stetter K.O."/>
            <person name="Malykh A.G."/>
            <person name="Koonin E.V."/>
            <person name="Kozyavkin S.A."/>
        </authorList>
    </citation>
    <scope>NUCLEOTIDE SEQUENCE [LARGE SCALE GENOMIC DNA]</scope>
    <source>
        <strain>AV19 / DSM 6324 / JCM 9639 / NBRC 100938</strain>
    </source>
</reference>
<evidence type="ECO:0000255" key="1">
    <source>
        <dbReference type="HAMAP-Rule" id="MF_01209"/>
    </source>
</evidence>
<keyword id="KW-0028">Amino-acid biosynthesis</keyword>
<keyword id="KW-0055">Arginine biosynthesis</keyword>
<keyword id="KW-0067">ATP-binding</keyword>
<keyword id="KW-0315">Glutamine amidotransferase</keyword>
<keyword id="KW-0436">Ligase</keyword>
<keyword id="KW-0547">Nucleotide-binding</keyword>
<keyword id="KW-0665">Pyrimidine biosynthesis</keyword>
<keyword id="KW-1185">Reference proteome</keyword>
<organism>
    <name type="scientific">Methanopyrus kandleri (strain AV19 / DSM 6324 / JCM 9639 / NBRC 100938)</name>
    <dbReference type="NCBI Taxonomy" id="190192"/>
    <lineage>
        <taxon>Archaea</taxon>
        <taxon>Methanobacteriati</taxon>
        <taxon>Methanobacteriota</taxon>
        <taxon>Methanomada group</taxon>
        <taxon>Methanopyri</taxon>
        <taxon>Methanopyrales</taxon>
        <taxon>Methanopyraceae</taxon>
        <taxon>Methanopyrus</taxon>
    </lineage>
</organism>
<accession>Q8TY15</accession>
<dbReference type="EC" id="6.3.5.5" evidence="1"/>
<dbReference type="EMBL" id="AE009439">
    <property type="protein sequence ID" value="AAM01706.1"/>
    <property type="molecule type" value="Genomic_DNA"/>
</dbReference>
<dbReference type="RefSeq" id="WP_011018861.1">
    <property type="nucleotide sequence ID" value="NC_003551.1"/>
</dbReference>
<dbReference type="SMR" id="Q8TY15"/>
<dbReference type="FunCoup" id="Q8TY15">
    <property type="interactions" value="243"/>
</dbReference>
<dbReference type="STRING" id="190192.MK0491"/>
<dbReference type="MEROPS" id="C26.A33"/>
<dbReference type="PaxDb" id="190192-MK0491"/>
<dbReference type="EnsemblBacteria" id="AAM01706">
    <property type="protein sequence ID" value="AAM01706"/>
    <property type="gene ID" value="MK0491"/>
</dbReference>
<dbReference type="GeneID" id="1477794"/>
<dbReference type="KEGG" id="mka:MK0491"/>
<dbReference type="PATRIC" id="fig|190192.8.peg.521"/>
<dbReference type="HOGENOM" id="CLU_035901_2_1_2"/>
<dbReference type="InParanoid" id="Q8TY15"/>
<dbReference type="OrthoDB" id="7675at2157"/>
<dbReference type="UniPathway" id="UPA00068">
    <property type="reaction ID" value="UER00171"/>
</dbReference>
<dbReference type="UniPathway" id="UPA00070">
    <property type="reaction ID" value="UER00115"/>
</dbReference>
<dbReference type="Proteomes" id="UP000001826">
    <property type="component" value="Chromosome"/>
</dbReference>
<dbReference type="GO" id="GO:0005524">
    <property type="term" value="F:ATP binding"/>
    <property type="evidence" value="ECO:0007669"/>
    <property type="project" value="UniProtKB-UniRule"/>
</dbReference>
<dbReference type="GO" id="GO:0004088">
    <property type="term" value="F:carbamoyl-phosphate synthase (glutamine-hydrolyzing) activity"/>
    <property type="evidence" value="ECO:0007669"/>
    <property type="project" value="UniProtKB-UniRule"/>
</dbReference>
<dbReference type="GO" id="GO:0004359">
    <property type="term" value="F:glutaminase activity"/>
    <property type="evidence" value="ECO:0007669"/>
    <property type="project" value="RHEA"/>
</dbReference>
<dbReference type="GO" id="GO:0006207">
    <property type="term" value="P:'de novo' pyrimidine nucleobase biosynthetic process"/>
    <property type="evidence" value="ECO:0007669"/>
    <property type="project" value="InterPro"/>
</dbReference>
<dbReference type="GO" id="GO:0044205">
    <property type="term" value="P:'de novo' UMP biosynthetic process"/>
    <property type="evidence" value="ECO:0007669"/>
    <property type="project" value="UniProtKB-UniRule"/>
</dbReference>
<dbReference type="GO" id="GO:0006541">
    <property type="term" value="P:glutamine metabolic process"/>
    <property type="evidence" value="ECO:0007669"/>
    <property type="project" value="InterPro"/>
</dbReference>
<dbReference type="GO" id="GO:0006526">
    <property type="term" value="P:L-arginine biosynthetic process"/>
    <property type="evidence" value="ECO:0007669"/>
    <property type="project" value="UniProtKB-UniRule"/>
</dbReference>
<dbReference type="CDD" id="cd01744">
    <property type="entry name" value="GATase1_CPSase"/>
    <property type="match status" value="1"/>
</dbReference>
<dbReference type="Gene3D" id="3.40.50.880">
    <property type="match status" value="1"/>
</dbReference>
<dbReference type="Gene3D" id="3.50.30.20">
    <property type="entry name" value="Carbamoyl-phosphate synthase small subunit, N-terminal domain"/>
    <property type="match status" value="1"/>
</dbReference>
<dbReference type="HAMAP" id="MF_01209">
    <property type="entry name" value="CPSase_S_chain"/>
    <property type="match status" value="1"/>
</dbReference>
<dbReference type="InterPro" id="IPR050472">
    <property type="entry name" value="Anth_synth/Amidotransfase"/>
</dbReference>
<dbReference type="InterPro" id="IPR006274">
    <property type="entry name" value="CarbamoylP_synth_ssu"/>
</dbReference>
<dbReference type="InterPro" id="IPR002474">
    <property type="entry name" value="CarbamoylP_synth_ssu_N"/>
</dbReference>
<dbReference type="InterPro" id="IPR036480">
    <property type="entry name" value="CarbP_synth_ssu_N_sf"/>
</dbReference>
<dbReference type="InterPro" id="IPR029062">
    <property type="entry name" value="Class_I_gatase-like"/>
</dbReference>
<dbReference type="InterPro" id="IPR035686">
    <property type="entry name" value="CPSase_GATase1"/>
</dbReference>
<dbReference type="InterPro" id="IPR017926">
    <property type="entry name" value="GATASE"/>
</dbReference>
<dbReference type="NCBIfam" id="TIGR01368">
    <property type="entry name" value="CPSaseIIsmall"/>
    <property type="match status" value="1"/>
</dbReference>
<dbReference type="NCBIfam" id="NF009475">
    <property type="entry name" value="PRK12838.1"/>
    <property type="match status" value="1"/>
</dbReference>
<dbReference type="PANTHER" id="PTHR43418:SF7">
    <property type="entry name" value="CARBAMOYL-PHOSPHATE SYNTHASE SMALL CHAIN"/>
    <property type="match status" value="1"/>
</dbReference>
<dbReference type="PANTHER" id="PTHR43418">
    <property type="entry name" value="MULTIFUNCTIONAL TRYPTOPHAN BIOSYNTHESIS PROTEIN-RELATED"/>
    <property type="match status" value="1"/>
</dbReference>
<dbReference type="Pfam" id="PF00988">
    <property type="entry name" value="CPSase_sm_chain"/>
    <property type="match status" value="1"/>
</dbReference>
<dbReference type="Pfam" id="PF00117">
    <property type="entry name" value="GATase"/>
    <property type="match status" value="1"/>
</dbReference>
<dbReference type="PRINTS" id="PR00097">
    <property type="entry name" value="ANTSNTHASEII"/>
</dbReference>
<dbReference type="PRINTS" id="PR00099">
    <property type="entry name" value="CPSGATASE"/>
</dbReference>
<dbReference type="PRINTS" id="PR00096">
    <property type="entry name" value="GATASE"/>
</dbReference>
<dbReference type="SMART" id="SM01097">
    <property type="entry name" value="CPSase_sm_chain"/>
    <property type="match status" value="1"/>
</dbReference>
<dbReference type="SUPFAM" id="SSF52021">
    <property type="entry name" value="Carbamoyl phosphate synthetase, small subunit N-terminal domain"/>
    <property type="match status" value="1"/>
</dbReference>
<dbReference type="SUPFAM" id="SSF52317">
    <property type="entry name" value="Class I glutamine amidotransferase-like"/>
    <property type="match status" value="1"/>
</dbReference>
<dbReference type="PROSITE" id="PS51273">
    <property type="entry name" value="GATASE_TYPE_1"/>
    <property type="match status" value="1"/>
</dbReference>